<dbReference type="EC" id="4.2.99.20" evidence="1"/>
<dbReference type="EMBL" id="CP000720">
    <property type="protein sequence ID" value="ABS46633.1"/>
    <property type="molecule type" value="Genomic_DNA"/>
</dbReference>
<dbReference type="RefSeq" id="WP_012104915.1">
    <property type="nucleotide sequence ID" value="NC_009708.1"/>
</dbReference>
<dbReference type="SMR" id="A7FGT3"/>
<dbReference type="ESTHER" id="yerpe-YPO2526">
    <property type="family name" value="MenH_SHCHC"/>
</dbReference>
<dbReference type="KEGG" id="ypi:YpsIP31758_1483"/>
<dbReference type="HOGENOM" id="CLU_020336_38_2_6"/>
<dbReference type="UniPathway" id="UPA00079"/>
<dbReference type="UniPathway" id="UPA01057">
    <property type="reaction ID" value="UER00900"/>
</dbReference>
<dbReference type="Proteomes" id="UP000002412">
    <property type="component" value="Chromosome"/>
</dbReference>
<dbReference type="GO" id="GO:0070205">
    <property type="term" value="F:2-succinyl-6-hydroxy-2,4-cyclohexadiene-1-carboxylate synthase activity"/>
    <property type="evidence" value="ECO:0007669"/>
    <property type="project" value="UniProtKB-UniRule"/>
</dbReference>
<dbReference type="GO" id="GO:0009234">
    <property type="term" value="P:menaquinone biosynthetic process"/>
    <property type="evidence" value="ECO:0007669"/>
    <property type="project" value="UniProtKB-UniRule"/>
</dbReference>
<dbReference type="Gene3D" id="3.40.50.1820">
    <property type="entry name" value="alpha/beta hydrolase"/>
    <property type="match status" value="1"/>
</dbReference>
<dbReference type="HAMAP" id="MF_01660">
    <property type="entry name" value="MenH"/>
    <property type="match status" value="1"/>
</dbReference>
<dbReference type="InterPro" id="IPR000073">
    <property type="entry name" value="AB_hydrolase_1"/>
</dbReference>
<dbReference type="InterPro" id="IPR029058">
    <property type="entry name" value="AB_hydrolase_fold"/>
</dbReference>
<dbReference type="InterPro" id="IPR022485">
    <property type="entry name" value="SHCHC_synthase_MenH"/>
</dbReference>
<dbReference type="NCBIfam" id="TIGR03695">
    <property type="entry name" value="menH_SHCHC"/>
    <property type="match status" value="1"/>
</dbReference>
<dbReference type="NCBIfam" id="NF008340">
    <property type="entry name" value="PRK11126.1"/>
    <property type="match status" value="1"/>
</dbReference>
<dbReference type="PANTHER" id="PTHR42916">
    <property type="entry name" value="2-SUCCINYL-5-ENOLPYRUVYL-6-HYDROXY-3-CYCLOHEXENE-1-CARBOXYLATE SYNTHASE"/>
    <property type="match status" value="1"/>
</dbReference>
<dbReference type="PANTHER" id="PTHR42916:SF1">
    <property type="entry name" value="PROTEIN PHYLLO, CHLOROPLASTIC"/>
    <property type="match status" value="1"/>
</dbReference>
<dbReference type="Pfam" id="PF12697">
    <property type="entry name" value="Abhydrolase_6"/>
    <property type="match status" value="1"/>
</dbReference>
<dbReference type="SUPFAM" id="SSF53474">
    <property type="entry name" value="alpha/beta-Hydrolases"/>
    <property type="match status" value="1"/>
</dbReference>
<evidence type="ECO:0000255" key="1">
    <source>
        <dbReference type="HAMAP-Rule" id="MF_01660"/>
    </source>
</evidence>
<proteinExistence type="inferred from homology"/>
<comment type="function">
    <text evidence="1">Catalyzes a proton abstraction reaction that results in 2,5-elimination of pyruvate from 2-succinyl-5-enolpyruvyl-6-hydroxy-3-cyclohexene-1-carboxylate (SEPHCHC) and the formation of 2-succinyl-6-hydroxy-2,4-cyclohexadiene-1-carboxylate (SHCHC).</text>
</comment>
<comment type="catalytic activity">
    <reaction evidence="1">
        <text>5-enolpyruvoyl-6-hydroxy-2-succinyl-cyclohex-3-ene-1-carboxylate = (1R,6R)-6-hydroxy-2-succinyl-cyclohexa-2,4-diene-1-carboxylate + pyruvate</text>
        <dbReference type="Rhea" id="RHEA:25597"/>
        <dbReference type="ChEBI" id="CHEBI:15361"/>
        <dbReference type="ChEBI" id="CHEBI:58689"/>
        <dbReference type="ChEBI" id="CHEBI:58818"/>
        <dbReference type="EC" id="4.2.99.20"/>
    </reaction>
</comment>
<comment type="pathway">
    <text evidence="1">Quinol/quinone metabolism; 1,4-dihydroxy-2-naphthoate biosynthesis; 1,4-dihydroxy-2-naphthoate from chorismate: step 3/7.</text>
</comment>
<comment type="pathway">
    <text evidence="1">Quinol/quinone metabolism; menaquinone biosynthesis.</text>
</comment>
<comment type="subunit">
    <text evidence="1">Monomer.</text>
</comment>
<comment type="similarity">
    <text evidence="1">Belongs to the AB hydrolase superfamily. MenH family.</text>
</comment>
<gene>
    <name evidence="1" type="primary">menH</name>
    <name type="ordered locus">YpsIP31758_1483</name>
</gene>
<organism>
    <name type="scientific">Yersinia pseudotuberculosis serotype O:1b (strain IP 31758)</name>
    <dbReference type="NCBI Taxonomy" id="349747"/>
    <lineage>
        <taxon>Bacteria</taxon>
        <taxon>Pseudomonadati</taxon>
        <taxon>Pseudomonadota</taxon>
        <taxon>Gammaproteobacteria</taxon>
        <taxon>Enterobacterales</taxon>
        <taxon>Yersiniaceae</taxon>
        <taxon>Yersinia</taxon>
    </lineage>
</organism>
<sequence length="272" mass="30371">MTTLACRKLAPHPESPRHQHAGPWLVWLHGLLGSRQDWLPVAQLCGDYPSLLIDLPGHGQSVSLSADGFADISRQLSQTLQANGIREYWLAGYSLGGRIAMYHACYGRHHGLQGLLVEGGNLGLENAELRQARLQQDRQWAQRFRQEPLPQVLDDWYQQAVFADLDPQQREQLVLLRADNHGPAVAEMLEATSLGHQPWLLPALQRLNVPYTYLCGDRDHKFLQLAQQYQLPLHTLARAGHNAHRANPGAFAAQVLAFLSQSSCLPPSSLSR</sequence>
<name>MENH_YERP3</name>
<protein>
    <recommendedName>
        <fullName evidence="1">2-succinyl-6-hydroxy-2,4-cyclohexadiene-1-carboxylate synthase</fullName>
        <shortName evidence="1">SHCHC synthase</shortName>
        <ecNumber evidence="1">4.2.99.20</ecNumber>
    </recommendedName>
</protein>
<reference key="1">
    <citation type="journal article" date="2007" name="PLoS Genet.">
        <title>The complete genome sequence of Yersinia pseudotuberculosis IP31758, the causative agent of Far East scarlet-like fever.</title>
        <authorList>
            <person name="Eppinger M."/>
            <person name="Rosovitz M.J."/>
            <person name="Fricke W.F."/>
            <person name="Rasko D.A."/>
            <person name="Kokorina G."/>
            <person name="Fayolle C."/>
            <person name="Lindler L.E."/>
            <person name="Carniel E."/>
            <person name="Ravel J."/>
        </authorList>
    </citation>
    <scope>NUCLEOTIDE SEQUENCE [LARGE SCALE GENOMIC DNA]</scope>
    <source>
        <strain>IP 31758</strain>
    </source>
</reference>
<feature type="chain" id="PRO_0000341935" description="2-succinyl-6-hydroxy-2,4-cyclohexadiene-1-carboxylate synthase">
    <location>
        <begin position="1"/>
        <end position="272"/>
    </location>
</feature>
<keyword id="KW-0456">Lyase</keyword>
<keyword id="KW-0474">Menaquinone biosynthesis</keyword>
<accession>A7FGT3</accession>